<protein>
    <recommendedName>
        <fullName evidence="1">Arginine--tRNA ligase</fullName>
        <ecNumber evidence="1">6.1.1.19</ecNumber>
    </recommendedName>
    <alternativeName>
        <fullName evidence="1">Arginyl-tRNA synthetase</fullName>
        <shortName evidence="1">ArgRS</shortName>
    </alternativeName>
</protein>
<organism>
    <name type="scientific">Nitratidesulfovibrio vulgaris (strain DSM 19637 / Miyazaki F)</name>
    <name type="common">Desulfovibrio vulgaris</name>
    <dbReference type="NCBI Taxonomy" id="883"/>
    <lineage>
        <taxon>Bacteria</taxon>
        <taxon>Pseudomonadati</taxon>
        <taxon>Thermodesulfobacteriota</taxon>
        <taxon>Desulfovibrionia</taxon>
        <taxon>Desulfovibrionales</taxon>
        <taxon>Desulfovibrionaceae</taxon>
        <taxon>Nitratidesulfovibrio</taxon>
    </lineage>
</organism>
<sequence length="551" mass="60466">MRARQQLLASLQAIVKDMGLSWPEKATLEPPRDKSFGDLAANIALVISKDAGVPPRELASRLAGALRDSDPAIASVDIAGPGFLNVTYSPDFWRETVLHVEAAGDRYGATAVGAGRKAQVEYVSANPTGPLHIGHGRGAALGDCLARVLRFAGYDVTTEYYINDAGRQMRLLGLSVWLRALELSGRPFTLPEDFYRGDYIKDIAAEMLAKDPGLVDLPEAEGQDRCFEYAMNSIMDGIKQDLADFRVEHQVWFSELSLVREGAVEKTFERLKAAGLAFEQDGALWFRTTTLGDDKDRVLRKSDGTLTYFASDIAYHDNKYDRGFDLVVDIWGADHHGYVPRMRAAVAALGKRPEQFDVILVQLVNLLQNGEQIAMSTRAGQFETLHDVVREVGADAARFMFLSRKSDSHLDFDLELVKQRSMDNPVYYVQYAHARVCAVLRKAAERAIVLPARLDAAALAPLTLPEELDLLRLVDRMPDTLSAAAEGLAPHHVSFYLMEVAGALHSYYAKVPVLNAADAETIVARLALLRAVGQAVANGLNLLGVEAPEAM</sequence>
<evidence type="ECO:0000255" key="1">
    <source>
        <dbReference type="HAMAP-Rule" id="MF_00123"/>
    </source>
</evidence>
<dbReference type="EC" id="6.1.1.19" evidence="1"/>
<dbReference type="EMBL" id="CP001197">
    <property type="protein sequence ID" value="ACL07806.1"/>
    <property type="molecule type" value="Genomic_DNA"/>
</dbReference>
<dbReference type="SMR" id="B8DNX4"/>
<dbReference type="STRING" id="883.DvMF_0850"/>
<dbReference type="KEGG" id="dvm:DvMF_0850"/>
<dbReference type="eggNOG" id="COG0018">
    <property type="taxonomic scope" value="Bacteria"/>
</dbReference>
<dbReference type="HOGENOM" id="CLU_006406_0_1_7"/>
<dbReference type="OrthoDB" id="9803211at2"/>
<dbReference type="GO" id="GO:0005737">
    <property type="term" value="C:cytoplasm"/>
    <property type="evidence" value="ECO:0007669"/>
    <property type="project" value="UniProtKB-SubCell"/>
</dbReference>
<dbReference type="GO" id="GO:0004814">
    <property type="term" value="F:arginine-tRNA ligase activity"/>
    <property type="evidence" value="ECO:0007669"/>
    <property type="project" value="UniProtKB-UniRule"/>
</dbReference>
<dbReference type="GO" id="GO:0005524">
    <property type="term" value="F:ATP binding"/>
    <property type="evidence" value="ECO:0007669"/>
    <property type="project" value="UniProtKB-UniRule"/>
</dbReference>
<dbReference type="GO" id="GO:0006420">
    <property type="term" value="P:arginyl-tRNA aminoacylation"/>
    <property type="evidence" value="ECO:0007669"/>
    <property type="project" value="UniProtKB-UniRule"/>
</dbReference>
<dbReference type="CDD" id="cd00671">
    <property type="entry name" value="ArgRS_core"/>
    <property type="match status" value="1"/>
</dbReference>
<dbReference type="FunFam" id="1.10.730.10:FF:000008">
    <property type="entry name" value="Arginine--tRNA ligase"/>
    <property type="match status" value="1"/>
</dbReference>
<dbReference type="FunFam" id="3.40.50.620:FF:000062">
    <property type="entry name" value="Arginine--tRNA ligase"/>
    <property type="match status" value="1"/>
</dbReference>
<dbReference type="Gene3D" id="3.30.1360.70">
    <property type="entry name" value="Arginyl tRNA synthetase N-terminal domain"/>
    <property type="match status" value="1"/>
</dbReference>
<dbReference type="Gene3D" id="3.40.50.620">
    <property type="entry name" value="HUPs"/>
    <property type="match status" value="1"/>
</dbReference>
<dbReference type="Gene3D" id="1.10.730.10">
    <property type="entry name" value="Isoleucyl-tRNA Synthetase, Domain 1"/>
    <property type="match status" value="1"/>
</dbReference>
<dbReference type="HAMAP" id="MF_00123">
    <property type="entry name" value="Arg_tRNA_synth"/>
    <property type="match status" value="1"/>
</dbReference>
<dbReference type="InterPro" id="IPR001412">
    <property type="entry name" value="aa-tRNA-synth_I_CS"/>
</dbReference>
<dbReference type="InterPro" id="IPR001278">
    <property type="entry name" value="Arg-tRNA-ligase"/>
</dbReference>
<dbReference type="InterPro" id="IPR005148">
    <property type="entry name" value="Arg-tRNA-synth_N"/>
</dbReference>
<dbReference type="InterPro" id="IPR036695">
    <property type="entry name" value="Arg-tRNA-synth_N_sf"/>
</dbReference>
<dbReference type="InterPro" id="IPR035684">
    <property type="entry name" value="ArgRS_core"/>
</dbReference>
<dbReference type="InterPro" id="IPR008909">
    <property type="entry name" value="DALR_anticod-bd"/>
</dbReference>
<dbReference type="InterPro" id="IPR014729">
    <property type="entry name" value="Rossmann-like_a/b/a_fold"/>
</dbReference>
<dbReference type="InterPro" id="IPR009080">
    <property type="entry name" value="tRNAsynth_Ia_anticodon-bd"/>
</dbReference>
<dbReference type="NCBIfam" id="TIGR00456">
    <property type="entry name" value="argS"/>
    <property type="match status" value="1"/>
</dbReference>
<dbReference type="PANTHER" id="PTHR11956:SF5">
    <property type="entry name" value="ARGININE--TRNA LIGASE, CYTOPLASMIC"/>
    <property type="match status" value="1"/>
</dbReference>
<dbReference type="PANTHER" id="PTHR11956">
    <property type="entry name" value="ARGINYL-TRNA SYNTHETASE"/>
    <property type="match status" value="1"/>
</dbReference>
<dbReference type="Pfam" id="PF03485">
    <property type="entry name" value="Arg_tRNA_synt_N"/>
    <property type="match status" value="1"/>
</dbReference>
<dbReference type="Pfam" id="PF05746">
    <property type="entry name" value="DALR_1"/>
    <property type="match status" value="1"/>
</dbReference>
<dbReference type="Pfam" id="PF00750">
    <property type="entry name" value="tRNA-synt_1d"/>
    <property type="match status" value="1"/>
</dbReference>
<dbReference type="PRINTS" id="PR01038">
    <property type="entry name" value="TRNASYNTHARG"/>
</dbReference>
<dbReference type="SMART" id="SM01016">
    <property type="entry name" value="Arg_tRNA_synt_N"/>
    <property type="match status" value="1"/>
</dbReference>
<dbReference type="SMART" id="SM00836">
    <property type="entry name" value="DALR_1"/>
    <property type="match status" value="1"/>
</dbReference>
<dbReference type="SUPFAM" id="SSF47323">
    <property type="entry name" value="Anticodon-binding domain of a subclass of class I aminoacyl-tRNA synthetases"/>
    <property type="match status" value="1"/>
</dbReference>
<dbReference type="SUPFAM" id="SSF55190">
    <property type="entry name" value="Arginyl-tRNA synthetase (ArgRS), N-terminal 'additional' domain"/>
    <property type="match status" value="1"/>
</dbReference>
<dbReference type="SUPFAM" id="SSF52374">
    <property type="entry name" value="Nucleotidylyl transferase"/>
    <property type="match status" value="1"/>
</dbReference>
<dbReference type="PROSITE" id="PS00178">
    <property type="entry name" value="AA_TRNA_LIGASE_I"/>
    <property type="match status" value="1"/>
</dbReference>
<feature type="chain" id="PRO_1000198898" description="Arginine--tRNA ligase">
    <location>
        <begin position="1"/>
        <end position="551"/>
    </location>
</feature>
<feature type="short sequence motif" description="'HIGH' region">
    <location>
        <begin position="125"/>
        <end position="135"/>
    </location>
</feature>
<reference key="1">
    <citation type="submission" date="2008-10" db="EMBL/GenBank/DDBJ databases">
        <title>Complete sequence of Desulfovibrio vulgaris str. 'Miyazaki F'.</title>
        <authorList>
            <person name="Lucas S."/>
            <person name="Copeland A."/>
            <person name="Lapidus A."/>
            <person name="Glavina del Rio T."/>
            <person name="Dalin E."/>
            <person name="Tice H."/>
            <person name="Bruce D."/>
            <person name="Goodwin L."/>
            <person name="Pitluck S."/>
            <person name="Sims D."/>
            <person name="Brettin T."/>
            <person name="Detter J.C."/>
            <person name="Han C."/>
            <person name="Larimer F."/>
            <person name="Land M."/>
            <person name="Hauser L."/>
            <person name="Kyrpides N."/>
            <person name="Mikhailova N."/>
            <person name="Hazen T.C."/>
            <person name="Richardson P."/>
        </authorList>
    </citation>
    <scope>NUCLEOTIDE SEQUENCE [LARGE SCALE GENOMIC DNA]</scope>
    <source>
        <strain>DSM 19637 / Miyazaki F</strain>
    </source>
</reference>
<gene>
    <name evidence="1" type="primary">argS</name>
    <name type="ordered locus">DvMF_0850</name>
</gene>
<proteinExistence type="inferred from homology"/>
<accession>B8DNX4</accession>
<comment type="catalytic activity">
    <reaction evidence="1">
        <text>tRNA(Arg) + L-arginine + ATP = L-arginyl-tRNA(Arg) + AMP + diphosphate</text>
        <dbReference type="Rhea" id="RHEA:20301"/>
        <dbReference type="Rhea" id="RHEA-COMP:9658"/>
        <dbReference type="Rhea" id="RHEA-COMP:9673"/>
        <dbReference type="ChEBI" id="CHEBI:30616"/>
        <dbReference type="ChEBI" id="CHEBI:32682"/>
        <dbReference type="ChEBI" id="CHEBI:33019"/>
        <dbReference type="ChEBI" id="CHEBI:78442"/>
        <dbReference type="ChEBI" id="CHEBI:78513"/>
        <dbReference type="ChEBI" id="CHEBI:456215"/>
        <dbReference type="EC" id="6.1.1.19"/>
    </reaction>
</comment>
<comment type="subunit">
    <text evidence="1">Monomer.</text>
</comment>
<comment type="subcellular location">
    <subcellularLocation>
        <location evidence="1">Cytoplasm</location>
    </subcellularLocation>
</comment>
<comment type="similarity">
    <text evidence="1">Belongs to the class-I aminoacyl-tRNA synthetase family.</text>
</comment>
<name>SYR_NITV9</name>
<keyword id="KW-0030">Aminoacyl-tRNA synthetase</keyword>
<keyword id="KW-0067">ATP-binding</keyword>
<keyword id="KW-0963">Cytoplasm</keyword>
<keyword id="KW-0436">Ligase</keyword>
<keyword id="KW-0547">Nucleotide-binding</keyword>
<keyword id="KW-0648">Protein biosynthesis</keyword>